<feature type="chain" id="PRO_1000057083" description="UPF0060 membrane protein Pmen_1247">
    <location>
        <begin position="1"/>
        <end position="110"/>
    </location>
</feature>
<feature type="transmembrane region" description="Helical" evidence="1">
    <location>
        <begin position="5"/>
        <end position="25"/>
    </location>
</feature>
<feature type="transmembrane region" description="Helical" evidence="1">
    <location>
        <begin position="31"/>
        <end position="51"/>
    </location>
</feature>
<feature type="transmembrane region" description="Helical" evidence="1">
    <location>
        <begin position="59"/>
        <end position="79"/>
    </location>
</feature>
<feature type="transmembrane region" description="Helical" evidence="1">
    <location>
        <begin position="84"/>
        <end position="104"/>
    </location>
</feature>
<organism>
    <name type="scientific">Ectopseudomonas mendocina (strain ymp)</name>
    <name type="common">Pseudomonas mendocina</name>
    <dbReference type="NCBI Taxonomy" id="399739"/>
    <lineage>
        <taxon>Bacteria</taxon>
        <taxon>Pseudomonadati</taxon>
        <taxon>Pseudomonadota</taxon>
        <taxon>Gammaproteobacteria</taxon>
        <taxon>Pseudomonadales</taxon>
        <taxon>Pseudomonadaceae</taxon>
        <taxon>Ectopseudomonas</taxon>
    </lineage>
</organism>
<keyword id="KW-0997">Cell inner membrane</keyword>
<keyword id="KW-1003">Cell membrane</keyword>
<keyword id="KW-0472">Membrane</keyword>
<keyword id="KW-0812">Transmembrane</keyword>
<keyword id="KW-1133">Transmembrane helix</keyword>
<sequence length="110" mass="12189">MTSYLWFLLAAVFEIAGCYAFWMWLRLDRSAWWIAPGLLSLVLFALILTRVEASFAGRAYAAYGGVYIVASLAWLALIEKTRPMLSDWLGAALCLAGAAIILFAPRLHTS</sequence>
<dbReference type="EMBL" id="CP000680">
    <property type="protein sequence ID" value="ABP84012.1"/>
    <property type="molecule type" value="Genomic_DNA"/>
</dbReference>
<dbReference type="SMR" id="A4XRP6"/>
<dbReference type="STRING" id="399739.Pmen_1247"/>
<dbReference type="KEGG" id="pmy:Pmen_1247"/>
<dbReference type="PATRIC" id="fig|399739.8.peg.1260"/>
<dbReference type="eggNOG" id="COG1742">
    <property type="taxonomic scope" value="Bacteria"/>
</dbReference>
<dbReference type="HOGENOM" id="CLU_117653_1_0_6"/>
<dbReference type="OrthoDB" id="123240at2"/>
<dbReference type="GO" id="GO:0005886">
    <property type="term" value="C:plasma membrane"/>
    <property type="evidence" value="ECO:0007669"/>
    <property type="project" value="UniProtKB-SubCell"/>
</dbReference>
<dbReference type="Gene3D" id="1.10.3730.20">
    <property type="match status" value="1"/>
</dbReference>
<dbReference type="HAMAP" id="MF_00010">
    <property type="entry name" value="UPF0060"/>
    <property type="match status" value="1"/>
</dbReference>
<dbReference type="InterPro" id="IPR003844">
    <property type="entry name" value="UPF0060"/>
</dbReference>
<dbReference type="NCBIfam" id="NF002586">
    <property type="entry name" value="PRK02237.1"/>
    <property type="match status" value="1"/>
</dbReference>
<dbReference type="PANTHER" id="PTHR36116">
    <property type="entry name" value="UPF0060 MEMBRANE PROTEIN YNFA"/>
    <property type="match status" value="1"/>
</dbReference>
<dbReference type="PANTHER" id="PTHR36116:SF1">
    <property type="entry name" value="UPF0060 MEMBRANE PROTEIN YNFA"/>
    <property type="match status" value="1"/>
</dbReference>
<dbReference type="Pfam" id="PF02694">
    <property type="entry name" value="UPF0060"/>
    <property type="match status" value="1"/>
</dbReference>
<dbReference type="SUPFAM" id="SSF103481">
    <property type="entry name" value="Multidrug resistance efflux transporter EmrE"/>
    <property type="match status" value="1"/>
</dbReference>
<name>Y1247_ECTM1</name>
<protein>
    <recommendedName>
        <fullName evidence="1">UPF0060 membrane protein Pmen_1247</fullName>
    </recommendedName>
</protein>
<evidence type="ECO:0000255" key="1">
    <source>
        <dbReference type="HAMAP-Rule" id="MF_00010"/>
    </source>
</evidence>
<proteinExistence type="inferred from homology"/>
<accession>A4XRP6</accession>
<reference key="1">
    <citation type="submission" date="2007-04" db="EMBL/GenBank/DDBJ databases">
        <title>Complete sequence of Pseudomonas mendocina ymp.</title>
        <authorList>
            <consortium name="US DOE Joint Genome Institute"/>
            <person name="Copeland A."/>
            <person name="Lucas S."/>
            <person name="Lapidus A."/>
            <person name="Barry K."/>
            <person name="Glavina del Rio T."/>
            <person name="Dalin E."/>
            <person name="Tice H."/>
            <person name="Pitluck S."/>
            <person name="Kiss H."/>
            <person name="Brettin T."/>
            <person name="Detter J.C."/>
            <person name="Bruce D."/>
            <person name="Han C."/>
            <person name="Schmutz J."/>
            <person name="Larimer F."/>
            <person name="Land M."/>
            <person name="Hauser L."/>
            <person name="Kyrpides N."/>
            <person name="Mikhailova N."/>
            <person name="Hersman L."/>
            <person name="Dubois J."/>
            <person name="Maurice P."/>
            <person name="Richardson P."/>
        </authorList>
    </citation>
    <scope>NUCLEOTIDE SEQUENCE [LARGE SCALE GENOMIC DNA]</scope>
    <source>
        <strain>ymp</strain>
    </source>
</reference>
<gene>
    <name type="ordered locus">Pmen_1247</name>
</gene>
<comment type="subcellular location">
    <subcellularLocation>
        <location evidence="1">Cell inner membrane</location>
        <topology evidence="1">Multi-pass membrane protein</topology>
    </subcellularLocation>
</comment>
<comment type="similarity">
    <text evidence="1">Belongs to the UPF0060 family.</text>
</comment>